<name>PSBX2_SYNJA</name>
<gene>
    <name evidence="1" type="primary">psbX2</name>
    <name type="ordered locus">CYA_2600</name>
</gene>
<sequence length="38" mass="4309">MTPSLANFLWSLVYGAVVLGLLFGAIVFVSQRDRVRRR</sequence>
<accession>Q2JRN5</accession>
<proteinExistence type="inferred from homology"/>
<keyword id="KW-0472">Membrane</keyword>
<keyword id="KW-0602">Photosynthesis</keyword>
<keyword id="KW-0604">Photosystem II</keyword>
<keyword id="KW-0793">Thylakoid</keyword>
<keyword id="KW-0812">Transmembrane</keyword>
<keyword id="KW-1133">Transmembrane helix</keyword>
<feature type="chain" id="PRO_0000345382" description="Photosystem II reaction center protein X 2">
    <location>
        <begin position="1"/>
        <end position="38"/>
    </location>
</feature>
<feature type="transmembrane region" description="Helical" evidence="1">
    <location>
        <begin position="8"/>
        <end position="28"/>
    </location>
</feature>
<reference key="1">
    <citation type="journal article" date="2007" name="ISME J.">
        <title>Population level functional diversity in a microbial community revealed by comparative genomic and metagenomic analyses.</title>
        <authorList>
            <person name="Bhaya D."/>
            <person name="Grossman A.R."/>
            <person name="Steunou A.-S."/>
            <person name="Khuri N."/>
            <person name="Cohan F.M."/>
            <person name="Hamamura N."/>
            <person name="Melendrez M.C."/>
            <person name="Bateson M.M."/>
            <person name="Ward D.M."/>
            <person name="Heidelberg J.F."/>
        </authorList>
    </citation>
    <scope>NUCLEOTIDE SEQUENCE [LARGE SCALE GENOMIC DNA]</scope>
    <source>
        <strain>JA-3-3Ab</strain>
    </source>
</reference>
<evidence type="ECO:0000255" key="1">
    <source>
        <dbReference type="HAMAP-Rule" id="MF_01386"/>
    </source>
</evidence>
<organism>
    <name type="scientific">Synechococcus sp. (strain JA-3-3Ab)</name>
    <name type="common">Cyanobacteria bacterium Yellowstone A-Prime</name>
    <dbReference type="NCBI Taxonomy" id="321327"/>
    <lineage>
        <taxon>Bacteria</taxon>
        <taxon>Bacillati</taxon>
        <taxon>Cyanobacteriota</taxon>
        <taxon>Cyanophyceae</taxon>
        <taxon>Synechococcales</taxon>
        <taxon>Synechococcaceae</taxon>
        <taxon>Synechococcus</taxon>
    </lineage>
</organism>
<comment type="function">
    <text evidence="1">Involved in the binding and/or turnover of quinones at the Q(B) site of photosystem II (PSII). PSII is a light-driven water plastoquinone oxidoreductase, using light energy to abstract electrons from H(2)O, generating a proton gradient subsequently used for ATP formation.</text>
</comment>
<comment type="subunit">
    <text evidence="1">PSII is composed of 1 copy each of membrane proteins PsbA, PsbB, PsbC, PsbD, PsbE, PsbF, PsbH, PsbI, PsbJ, PsbK, PsbL, PsbM, PsbT, PsbX, PsbY, PsbZ, Psb30/Ycf12, peripheral proteins PsbO, CyanoQ (PsbQ), PsbU, PsbV and a large number of cofactors. It forms dimeric complexes.</text>
</comment>
<comment type="subcellular location">
    <subcellularLocation>
        <location evidence="1">Cellular thylakoid membrane</location>
        <topology evidence="1">Single-pass membrane protein</topology>
    </subcellularLocation>
</comment>
<comment type="similarity">
    <text evidence="1">Belongs to the PsbX family. Type 1 subfamily.</text>
</comment>
<dbReference type="EMBL" id="CP000239">
    <property type="protein sequence ID" value="ABD00716.1"/>
    <property type="molecule type" value="Genomic_DNA"/>
</dbReference>
<dbReference type="RefSeq" id="WP_011431389.1">
    <property type="nucleotide sequence ID" value="NC_007775.1"/>
</dbReference>
<dbReference type="SMR" id="Q2JRN5"/>
<dbReference type="STRING" id="321327.CYA_2600"/>
<dbReference type="KEGG" id="cya:CYA_2600"/>
<dbReference type="eggNOG" id="ENOG5030Y19">
    <property type="taxonomic scope" value="Bacteria"/>
</dbReference>
<dbReference type="HOGENOM" id="CLU_212837_0_1_3"/>
<dbReference type="OrthoDB" id="541645at2"/>
<dbReference type="Proteomes" id="UP000008818">
    <property type="component" value="Chromosome"/>
</dbReference>
<dbReference type="GO" id="GO:0009523">
    <property type="term" value="C:photosystem II"/>
    <property type="evidence" value="ECO:0007669"/>
    <property type="project" value="UniProtKB-KW"/>
</dbReference>
<dbReference type="GO" id="GO:0031676">
    <property type="term" value="C:plasma membrane-derived thylakoid membrane"/>
    <property type="evidence" value="ECO:0007669"/>
    <property type="project" value="UniProtKB-SubCell"/>
</dbReference>
<dbReference type="GO" id="GO:0015979">
    <property type="term" value="P:photosynthesis"/>
    <property type="evidence" value="ECO:0007669"/>
    <property type="project" value="UniProtKB-UniRule"/>
</dbReference>
<dbReference type="Gene3D" id="1.20.5.510">
    <property type="entry name" value="Single helix bin"/>
    <property type="match status" value="1"/>
</dbReference>
<dbReference type="HAMAP" id="MF_01386">
    <property type="entry name" value="PSII_PsbX_1"/>
    <property type="match status" value="1"/>
</dbReference>
<dbReference type="InterPro" id="IPR009518">
    <property type="entry name" value="PSII_PsbX"/>
</dbReference>
<dbReference type="InterPro" id="IPR023431">
    <property type="entry name" value="PSII_PsbX_type_1_subfam"/>
</dbReference>
<dbReference type="Pfam" id="PF06596">
    <property type="entry name" value="PsbX"/>
    <property type="match status" value="1"/>
</dbReference>
<protein>
    <recommendedName>
        <fullName evidence="1">Photosystem II reaction center protein X 2</fullName>
    </recommendedName>
</protein>